<comment type="function">
    <text evidence="1">Reversibly catalyzes the transfer of the carbamoyl group from carbamoyl phosphate (CP) to the N(epsilon) atom of ornithine (ORN) to produce L-citrulline.</text>
</comment>
<comment type="catalytic activity">
    <reaction evidence="2">
        <text>carbamoyl phosphate + L-ornithine = L-citrulline + phosphate + H(+)</text>
        <dbReference type="Rhea" id="RHEA:19513"/>
        <dbReference type="ChEBI" id="CHEBI:15378"/>
        <dbReference type="ChEBI" id="CHEBI:43474"/>
        <dbReference type="ChEBI" id="CHEBI:46911"/>
        <dbReference type="ChEBI" id="CHEBI:57743"/>
        <dbReference type="ChEBI" id="CHEBI:58228"/>
        <dbReference type="EC" id="2.1.3.3"/>
    </reaction>
</comment>
<comment type="pathway">
    <text evidence="2">Amino-acid biosynthesis; L-arginine biosynthesis; L-arginine from L-ornithine and carbamoyl phosphate: step 1/3.</text>
</comment>
<comment type="subcellular location">
    <subcellularLocation>
        <location evidence="2">Cytoplasm</location>
    </subcellularLocation>
</comment>
<comment type="similarity">
    <text evidence="2">Belongs to the aspartate/ornithine carbamoyltransferase superfamily. OTCase family.</text>
</comment>
<name>OTC_ACIC1</name>
<reference key="1">
    <citation type="journal article" date="2009" name="Genome Res.">
        <title>Complete genome of the cellulolytic thermophile Acidothermus cellulolyticus 11B provides insights into its ecophysiological and evolutionary adaptations.</title>
        <authorList>
            <person name="Barabote R.D."/>
            <person name="Xie G."/>
            <person name="Leu D.H."/>
            <person name="Normand P."/>
            <person name="Necsulea A."/>
            <person name="Daubin V."/>
            <person name="Medigue C."/>
            <person name="Adney W.S."/>
            <person name="Xu X.C."/>
            <person name="Lapidus A."/>
            <person name="Parales R.E."/>
            <person name="Detter C."/>
            <person name="Pujic P."/>
            <person name="Bruce D."/>
            <person name="Lavire C."/>
            <person name="Challacombe J.F."/>
            <person name="Brettin T.S."/>
            <person name="Berry A.M."/>
        </authorList>
    </citation>
    <scope>NUCLEOTIDE SEQUENCE [LARGE SCALE GENOMIC DNA]</scope>
    <source>
        <strain>ATCC 43068 / DSM 8971 / 11B</strain>
    </source>
</reference>
<accession>A0LUC1</accession>
<proteinExistence type="inferred from homology"/>
<organism>
    <name type="scientific">Acidothermus cellulolyticus (strain ATCC 43068 / DSM 8971 / 11B)</name>
    <dbReference type="NCBI Taxonomy" id="351607"/>
    <lineage>
        <taxon>Bacteria</taxon>
        <taxon>Bacillati</taxon>
        <taxon>Actinomycetota</taxon>
        <taxon>Actinomycetes</taxon>
        <taxon>Acidothermales</taxon>
        <taxon>Acidothermaceae</taxon>
        <taxon>Acidothermus</taxon>
    </lineage>
</organism>
<keyword id="KW-0028">Amino-acid biosynthesis</keyword>
<keyword id="KW-0055">Arginine biosynthesis</keyword>
<keyword id="KW-0963">Cytoplasm</keyword>
<keyword id="KW-1185">Reference proteome</keyword>
<keyword id="KW-0808">Transferase</keyword>
<sequence>MIRHFLADDDLTPSEQAAVLDEAARLKKDRYAARPLTGPRSVAVVFEKPSTRTRVSFEVAITELGGQPVVLDAVGSQLGRGEPIEDTARVLSRYVAAIVLRTFGHDRITTLARYATVPVVNALSDAYHPCQALADLLTIRERKGGLDGVRLAYVGDGNNVACSLLVAGAMAGLHVTVASPAGYQPPPAVVARAAEIGEQTGGRVEVVDDPRTAARNADVLYTDVWTSMGQEEETAARRRAFAGFTVDDDLLALAADDAIVLHCLPAHRGEEITASVLEGPQSAIFDQAENRLHTAKALLSFLLDAAGGRGIP</sequence>
<feature type="chain" id="PRO_1000084832" description="Ornithine carbamoyltransferase">
    <location>
        <begin position="1"/>
        <end position="312"/>
    </location>
</feature>
<feature type="binding site" evidence="2">
    <location>
        <begin position="50"/>
        <end position="53"/>
    </location>
    <ligand>
        <name>carbamoyl phosphate</name>
        <dbReference type="ChEBI" id="CHEBI:58228"/>
    </ligand>
</feature>
<feature type="binding site" evidence="2">
    <location>
        <position position="77"/>
    </location>
    <ligand>
        <name>carbamoyl phosphate</name>
        <dbReference type="ChEBI" id="CHEBI:58228"/>
    </ligand>
</feature>
<feature type="binding site" evidence="2">
    <location>
        <position position="101"/>
    </location>
    <ligand>
        <name>carbamoyl phosphate</name>
        <dbReference type="ChEBI" id="CHEBI:58228"/>
    </ligand>
</feature>
<feature type="binding site" evidence="2">
    <location>
        <begin position="128"/>
        <end position="131"/>
    </location>
    <ligand>
        <name>carbamoyl phosphate</name>
        <dbReference type="ChEBI" id="CHEBI:58228"/>
    </ligand>
</feature>
<feature type="binding site" evidence="2">
    <location>
        <position position="159"/>
    </location>
    <ligand>
        <name>L-ornithine</name>
        <dbReference type="ChEBI" id="CHEBI:46911"/>
    </ligand>
</feature>
<feature type="binding site" evidence="2">
    <location>
        <position position="223"/>
    </location>
    <ligand>
        <name>L-ornithine</name>
        <dbReference type="ChEBI" id="CHEBI:46911"/>
    </ligand>
</feature>
<feature type="binding site" evidence="2">
    <location>
        <begin position="227"/>
        <end position="228"/>
    </location>
    <ligand>
        <name>L-ornithine</name>
        <dbReference type="ChEBI" id="CHEBI:46911"/>
    </ligand>
</feature>
<feature type="binding site" evidence="2">
    <location>
        <begin position="263"/>
        <end position="264"/>
    </location>
    <ligand>
        <name>carbamoyl phosphate</name>
        <dbReference type="ChEBI" id="CHEBI:58228"/>
    </ligand>
</feature>
<feature type="binding site" evidence="2">
    <location>
        <position position="291"/>
    </location>
    <ligand>
        <name>carbamoyl phosphate</name>
        <dbReference type="ChEBI" id="CHEBI:58228"/>
    </ligand>
</feature>
<protein>
    <recommendedName>
        <fullName evidence="2">Ornithine carbamoyltransferase</fullName>
        <shortName evidence="2">OTCase</shortName>
        <ecNumber evidence="2">2.1.3.3</ecNumber>
    </recommendedName>
</protein>
<dbReference type="EC" id="2.1.3.3" evidence="2"/>
<dbReference type="EMBL" id="CP000481">
    <property type="protein sequence ID" value="ABK53031.1"/>
    <property type="molecule type" value="Genomic_DNA"/>
</dbReference>
<dbReference type="RefSeq" id="WP_011720094.1">
    <property type="nucleotide sequence ID" value="NC_008578.1"/>
</dbReference>
<dbReference type="SMR" id="A0LUC1"/>
<dbReference type="FunCoup" id="A0LUC1">
    <property type="interactions" value="304"/>
</dbReference>
<dbReference type="STRING" id="351607.Acel_1259"/>
<dbReference type="KEGG" id="ace:Acel_1259"/>
<dbReference type="eggNOG" id="COG0078">
    <property type="taxonomic scope" value="Bacteria"/>
</dbReference>
<dbReference type="HOGENOM" id="CLU_043846_3_2_11"/>
<dbReference type="InParanoid" id="A0LUC1"/>
<dbReference type="OrthoDB" id="9802587at2"/>
<dbReference type="UniPathway" id="UPA00068">
    <property type="reaction ID" value="UER00112"/>
</dbReference>
<dbReference type="Proteomes" id="UP000008221">
    <property type="component" value="Chromosome"/>
</dbReference>
<dbReference type="GO" id="GO:0005737">
    <property type="term" value="C:cytoplasm"/>
    <property type="evidence" value="ECO:0007669"/>
    <property type="project" value="UniProtKB-SubCell"/>
</dbReference>
<dbReference type="GO" id="GO:0016597">
    <property type="term" value="F:amino acid binding"/>
    <property type="evidence" value="ECO:0007669"/>
    <property type="project" value="InterPro"/>
</dbReference>
<dbReference type="GO" id="GO:0004585">
    <property type="term" value="F:ornithine carbamoyltransferase activity"/>
    <property type="evidence" value="ECO:0007669"/>
    <property type="project" value="UniProtKB-UniRule"/>
</dbReference>
<dbReference type="GO" id="GO:0042450">
    <property type="term" value="P:arginine biosynthetic process via ornithine"/>
    <property type="evidence" value="ECO:0007669"/>
    <property type="project" value="TreeGrafter"/>
</dbReference>
<dbReference type="GO" id="GO:0019240">
    <property type="term" value="P:citrulline biosynthetic process"/>
    <property type="evidence" value="ECO:0007669"/>
    <property type="project" value="TreeGrafter"/>
</dbReference>
<dbReference type="GO" id="GO:0006526">
    <property type="term" value="P:L-arginine biosynthetic process"/>
    <property type="evidence" value="ECO:0007669"/>
    <property type="project" value="UniProtKB-UniRule"/>
</dbReference>
<dbReference type="FunFam" id="3.40.50.1370:FF:000008">
    <property type="entry name" value="Ornithine carbamoyltransferase"/>
    <property type="match status" value="1"/>
</dbReference>
<dbReference type="Gene3D" id="3.40.50.1370">
    <property type="entry name" value="Aspartate/ornithine carbamoyltransferase"/>
    <property type="match status" value="2"/>
</dbReference>
<dbReference type="HAMAP" id="MF_01109">
    <property type="entry name" value="OTCase"/>
    <property type="match status" value="1"/>
</dbReference>
<dbReference type="InterPro" id="IPR006132">
    <property type="entry name" value="Asp/Orn_carbamoyltranf_P-bd"/>
</dbReference>
<dbReference type="InterPro" id="IPR006130">
    <property type="entry name" value="Asp/Orn_carbamoylTrfase"/>
</dbReference>
<dbReference type="InterPro" id="IPR036901">
    <property type="entry name" value="Asp/Orn_carbamoylTrfase_sf"/>
</dbReference>
<dbReference type="InterPro" id="IPR006131">
    <property type="entry name" value="Asp_carbamoyltransf_Asp/Orn-bd"/>
</dbReference>
<dbReference type="InterPro" id="IPR002292">
    <property type="entry name" value="Orn/put_carbamltrans"/>
</dbReference>
<dbReference type="InterPro" id="IPR024904">
    <property type="entry name" value="OTCase_ArgI"/>
</dbReference>
<dbReference type="NCBIfam" id="TIGR00658">
    <property type="entry name" value="orni_carb_tr"/>
    <property type="match status" value="1"/>
</dbReference>
<dbReference type="NCBIfam" id="NF001986">
    <property type="entry name" value="PRK00779.1"/>
    <property type="match status" value="1"/>
</dbReference>
<dbReference type="PANTHER" id="PTHR45753">
    <property type="entry name" value="ORNITHINE CARBAMOYLTRANSFERASE, MITOCHONDRIAL"/>
    <property type="match status" value="1"/>
</dbReference>
<dbReference type="PANTHER" id="PTHR45753:SF3">
    <property type="entry name" value="ORNITHINE TRANSCARBAMYLASE, MITOCHONDRIAL"/>
    <property type="match status" value="1"/>
</dbReference>
<dbReference type="Pfam" id="PF00185">
    <property type="entry name" value="OTCace"/>
    <property type="match status" value="1"/>
</dbReference>
<dbReference type="Pfam" id="PF02729">
    <property type="entry name" value="OTCace_N"/>
    <property type="match status" value="1"/>
</dbReference>
<dbReference type="PRINTS" id="PR00100">
    <property type="entry name" value="AOTCASE"/>
</dbReference>
<dbReference type="PRINTS" id="PR00102">
    <property type="entry name" value="OTCASE"/>
</dbReference>
<dbReference type="SUPFAM" id="SSF53671">
    <property type="entry name" value="Aspartate/ornithine carbamoyltransferase"/>
    <property type="match status" value="1"/>
</dbReference>
<dbReference type="PROSITE" id="PS00097">
    <property type="entry name" value="CARBAMOYLTRANSFERASE"/>
    <property type="match status" value="1"/>
</dbReference>
<evidence type="ECO:0000250" key="1"/>
<evidence type="ECO:0000255" key="2">
    <source>
        <dbReference type="HAMAP-Rule" id="MF_01109"/>
    </source>
</evidence>
<gene>
    <name evidence="2" type="primary">argF</name>
    <name type="ordered locus">Acel_1259</name>
</gene>